<evidence type="ECO:0000250" key="1">
    <source>
        <dbReference type="UniProtKB" id="P86475"/>
    </source>
</evidence>
<evidence type="ECO:0000269" key="2">
    <source>
    </source>
</evidence>
<evidence type="ECO:0000303" key="3">
    <source>
    </source>
</evidence>
<evidence type="ECO:0000305" key="4"/>
<evidence type="ECO:0000305" key="5">
    <source>
    </source>
</evidence>
<accession>P0DQL8</accession>
<comment type="function">
    <text evidence="1 2">Lanthionine-containing peptide that does probably not show antibacterial activity, since its analog [+7]Flvbeta.f does not show antibacterial activity against M.luteus (PubMed:27028884). Also does not show antibiotic activity when tested with [Del2]Flvalpha.a, an analog of Flvalpha.a, which is encoded by the same operon than Flvbeta.f (PubMed:27028884). The bactericidal activity of lantibiotics is based on depolarization of energized bacterial cytoplasmic membranes, initiated by the formation of aqueous transmembrane pores (By similarity).</text>
</comment>
<comment type="subcellular location">
    <subcellularLocation>
        <location evidence="4">Secreted</location>
    </subcellularLocation>
</comment>
<comment type="PTM">
    <text evidence="2">Contains DL-beta-methyllanthionine, when coepressed in E.coli with the flavecin synthetase FlvM2.</text>
</comment>
<protein>
    <recommendedName>
        <fullName evidence="3">Lantipeptide Flvbeta.f</fullName>
    </recommendedName>
</protein>
<keyword id="KW-0964">Secreted</keyword>
<keyword id="KW-0883">Thioether bond</keyword>
<dbReference type="GO" id="GO:0005576">
    <property type="term" value="C:extracellular region"/>
    <property type="evidence" value="ECO:0007669"/>
    <property type="project" value="UniProtKB-SubCell"/>
</dbReference>
<feature type="propeptide" id="PRO_0000450406" description="Cleaved by FlvT" evidence="5">
    <location>
        <begin position="1"/>
        <end position="27"/>
    </location>
</feature>
<feature type="peptide" id="PRO_0000450407" description="Lantipeptide Flvbeta.f" evidence="5">
    <location>
        <begin position="28"/>
        <end position="59"/>
    </location>
</feature>
<feature type="modified residue" description="2,3-didehydrobutyrine; by FlvM2" evidence="5">
    <location>
        <position position="31"/>
    </location>
</feature>
<feature type="modified residue" description="2,3-didehydrobutyrine; by FlvM2" evidence="5">
    <location>
        <position position="32"/>
    </location>
</feature>
<feature type="cross-link" description="Beta-methyllanthionine (Thr-Cys); by FlvM2" evidence="5">
    <location>
        <begin position="41"/>
        <end position="47"/>
    </location>
</feature>
<feature type="cross-link" description="Beta-methyllanthionine (Thr-Cys); by FlvM2" evidence="5">
    <location>
        <begin position="53"/>
        <end position="56"/>
    </location>
</feature>
<gene>
    <name evidence="3" type="primary">FlvA2.f</name>
</gene>
<sequence length="59" mass="6560">MEKMNNIAGITPENELDEMFDDSVVGAVGYTTYWGILPLVTKNPQICPVSENTVKCRLL</sequence>
<proteinExistence type="inferred from homology"/>
<organism>
    <name type="scientific">Ruminococcus flavefaciens</name>
    <dbReference type="NCBI Taxonomy" id="1265"/>
    <lineage>
        <taxon>Bacteria</taxon>
        <taxon>Bacillati</taxon>
        <taxon>Bacillota</taxon>
        <taxon>Clostridia</taxon>
        <taxon>Eubacteriales</taxon>
        <taxon>Oscillospiraceae</taxon>
        <taxon>Ruminococcus</taxon>
    </lineage>
</organism>
<reference key="1">
    <citation type="journal article" date="2016" name="Cell Chem. Biol.">
        <title>Structural characterization and bioactivity analysis of the two-component lantibiotic Flv system from a ruminant bacterium.</title>
        <authorList>
            <person name="Zhao X."/>
            <person name="van der Donk W.A."/>
        </authorList>
    </citation>
    <scope>NUCLEOTIDE SEQUENCE [GENOMIC DNA]</scope>
    <scope>EXPRESSION IN E.COLI</scope>
    <scope>DEHYDRATION AT THR-31 AND THR-32</scope>
    <scope>METHYLLANTHIONINE CROSS-LINKS</scope>
    <source>
        <strain>FD-1</strain>
    </source>
</reference>
<name>LAN2F_RUMFL</name>